<comment type="function">
    <text evidence="1">NDH-1 shuttles electrons from NADH, via FMN and iron-sulfur (Fe-S) centers, to quinones in the respiratory chain. Couples the redox reaction to proton translocation (for every two electrons transferred, four hydrogen ions are translocated across the cytoplasmic membrane), and thus conserves the redox energy in a proton gradient (By similarity).</text>
</comment>
<comment type="catalytic activity">
    <reaction evidence="2">
        <text>a quinone + NADH + 5 H(+)(in) = a quinol + NAD(+) + 4 H(+)(out)</text>
        <dbReference type="Rhea" id="RHEA:57888"/>
        <dbReference type="ChEBI" id="CHEBI:15378"/>
        <dbReference type="ChEBI" id="CHEBI:24646"/>
        <dbReference type="ChEBI" id="CHEBI:57540"/>
        <dbReference type="ChEBI" id="CHEBI:57945"/>
        <dbReference type="ChEBI" id="CHEBI:132124"/>
    </reaction>
</comment>
<comment type="cofactor">
    <cofactor evidence="2">
        <name>[4Fe-4S] cluster</name>
        <dbReference type="ChEBI" id="CHEBI:49883"/>
    </cofactor>
    <text evidence="2">Binds 1 [4Fe-4S] cluster.</text>
</comment>
<comment type="subunit">
    <text evidence="2">NDH-1 is composed of 14 different subunits. Subunits NuoB, C, D, E, F, and G constitute the peripheral sector of the complex.</text>
</comment>
<comment type="subcellular location">
    <subcellularLocation>
        <location evidence="2">Cell inner membrane</location>
        <topology evidence="2">Peripheral membrane protein</topology>
        <orientation evidence="2">Cytoplasmic side</orientation>
    </subcellularLocation>
</comment>
<comment type="similarity">
    <text evidence="2">Belongs to the complex I 20 kDa subunit family.</text>
</comment>
<name>NUOB_BURCH</name>
<keyword id="KW-0004">4Fe-4S</keyword>
<keyword id="KW-0997">Cell inner membrane</keyword>
<keyword id="KW-1003">Cell membrane</keyword>
<keyword id="KW-0408">Iron</keyword>
<keyword id="KW-0411">Iron-sulfur</keyword>
<keyword id="KW-0472">Membrane</keyword>
<keyword id="KW-0479">Metal-binding</keyword>
<keyword id="KW-0520">NAD</keyword>
<keyword id="KW-0874">Quinone</keyword>
<keyword id="KW-1278">Translocase</keyword>
<keyword id="KW-0813">Transport</keyword>
<keyword id="KW-0830">Ubiquinone</keyword>
<sequence>MSIEGVLKEGFVTTTADKLINWTRTGSLWPMTFGLACCAVEMMHAGAARYDLDRFGVVFRPSPRQSDVMIVAGTLCNKMAPALRRVYDQMAEPRWVISMGSCANGGGYYHYSYSVVRGCDRIVPVDVYVPGCPPTAEALVYGVIQLQAKIRRTNTIARQ</sequence>
<evidence type="ECO:0000250" key="1"/>
<evidence type="ECO:0000255" key="2">
    <source>
        <dbReference type="HAMAP-Rule" id="MF_01356"/>
    </source>
</evidence>
<proteinExistence type="inferred from homology"/>
<dbReference type="EC" id="7.1.1.-" evidence="2"/>
<dbReference type="EMBL" id="CP000458">
    <property type="protein sequence ID" value="ABK08999.1"/>
    <property type="molecule type" value="Genomic_DNA"/>
</dbReference>
<dbReference type="RefSeq" id="WP_006398799.1">
    <property type="nucleotide sequence ID" value="NC_008542.1"/>
</dbReference>
<dbReference type="SMR" id="A0K922"/>
<dbReference type="KEGG" id="bch:Bcen2424_2248"/>
<dbReference type="HOGENOM" id="CLU_055737_7_3_4"/>
<dbReference type="GO" id="GO:0005886">
    <property type="term" value="C:plasma membrane"/>
    <property type="evidence" value="ECO:0007669"/>
    <property type="project" value="UniProtKB-SubCell"/>
</dbReference>
<dbReference type="GO" id="GO:0045271">
    <property type="term" value="C:respiratory chain complex I"/>
    <property type="evidence" value="ECO:0007669"/>
    <property type="project" value="TreeGrafter"/>
</dbReference>
<dbReference type="GO" id="GO:0051539">
    <property type="term" value="F:4 iron, 4 sulfur cluster binding"/>
    <property type="evidence" value="ECO:0007669"/>
    <property type="project" value="UniProtKB-KW"/>
</dbReference>
<dbReference type="GO" id="GO:0005506">
    <property type="term" value="F:iron ion binding"/>
    <property type="evidence" value="ECO:0007669"/>
    <property type="project" value="UniProtKB-UniRule"/>
</dbReference>
<dbReference type="GO" id="GO:0008137">
    <property type="term" value="F:NADH dehydrogenase (ubiquinone) activity"/>
    <property type="evidence" value="ECO:0007669"/>
    <property type="project" value="InterPro"/>
</dbReference>
<dbReference type="GO" id="GO:0050136">
    <property type="term" value="F:NADH:ubiquinone reductase (non-electrogenic) activity"/>
    <property type="evidence" value="ECO:0007669"/>
    <property type="project" value="UniProtKB-UniRule"/>
</dbReference>
<dbReference type="GO" id="GO:0048038">
    <property type="term" value="F:quinone binding"/>
    <property type="evidence" value="ECO:0007669"/>
    <property type="project" value="UniProtKB-KW"/>
</dbReference>
<dbReference type="GO" id="GO:0009060">
    <property type="term" value="P:aerobic respiration"/>
    <property type="evidence" value="ECO:0007669"/>
    <property type="project" value="TreeGrafter"/>
</dbReference>
<dbReference type="GO" id="GO:0015990">
    <property type="term" value="P:electron transport coupled proton transport"/>
    <property type="evidence" value="ECO:0007669"/>
    <property type="project" value="TreeGrafter"/>
</dbReference>
<dbReference type="FunFam" id="3.40.50.12280:FF:000001">
    <property type="entry name" value="NADH-quinone oxidoreductase subunit B 2"/>
    <property type="match status" value="1"/>
</dbReference>
<dbReference type="Gene3D" id="3.40.50.12280">
    <property type="match status" value="1"/>
</dbReference>
<dbReference type="HAMAP" id="MF_01356">
    <property type="entry name" value="NDH1_NuoB"/>
    <property type="match status" value="1"/>
</dbReference>
<dbReference type="InterPro" id="IPR006137">
    <property type="entry name" value="NADH_UbQ_OxRdtase-like_20kDa"/>
</dbReference>
<dbReference type="InterPro" id="IPR006138">
    <property type="entry name" value="NADH_UQ_OxRdtase_20Kd_su"/>
</dbReference>
<dbReference type="NCBIfam" id="TIGR01957">
    <property type="entry name" value="nuoB_fam"/>
    <property type="match status" value="1"/>
</dbReference>
<dbReference type="NCBIfam" id="NF005012">
    <property type="entry name" value="PRK06411.1"/>
    <property type="match status" value="1"/>
</dbReference>
<dbReference type="PANTHER" id="PTHR11995">
    <property type="entry name" value="NADH DEHYDROGENASE"/>
    <property type="match status" value="1"/>
</dbReference>
<dbReference type="PANTHER" id="PTHR11995:SF14">
    <property type="entry name" value="NADH DEHYDROGENASE [UBIQUINONE] IRON-SULFUR PROTEIN 7, MITOCHONDRIAL"/>
    <property type="match status" value="1"/>
</dbReference>
<dbReference type="Pfam" id="PF01058">
    <property type="entry name" value="Oxidored_q6"/>
    <property type="match status" value="1"/>
</dbReference>
<dbReference type="SUPFAM" id="SSF56770">
    <property type="entry name" value="HydA/Nqo6-like"/>
    <property type="match status" value="1"/>
</dbReference>
<dbReference type="PROSITE" id="PS01150">
    <property type="entry name" value="COMPLEX1_20K"/>
    <property type="match status" value="1"/>
</dbReference>
<gene>
    <name evidence="2" type="primary">nuoB</name>
    <name type="ordered locus">Bcen2424_2248</name>
</gene>
<accession>A0K922</accession>
<reference key="1">
    <citation type="submission" date="2006-08" db="EMBL/GenBank/DDBJ databases">
        <title>Complete sequence of chromosome 1 of Burkholderia cenocepacia HI2424.</title>
        <authorList>
            <person name="Copeland A."/>
            <person name="Lucas S."/>
            <person name="Lapidus A."/>
            <person name="Barry K."/>
            <person name="Detter J.C."/>
            <person name="Glavina del Rio T."/>
            <person name="Hammon N."/>
            <person name="Israni S."/>
            <person name="Pitluck S."/>
            <person name="Chain P."/>
            <person name="Malfatti S."/>
            <person name="Shin M."/>
            <person name="Vergez L."/>
            <person name="Schmutz J."/>
            <person name="Larimer F."/>
            <person name="Land M."/>
            <person name="Hauser L."/>
            <person name="Kyrpides N."/>
            <person name="Kim E."/>
            <person name="LiPuma J.J."/>
            <person name="Gonzalez C.F."/>
            <person name="Konstantinidis K."/>
            <person name="Tiedje J.M."/>
            <person name="Richardson P."/>
        </authorList>
    </citation>
    <scope>NUCLEOTIDE SEQUENCE [LARGE SCALE GENOMIC DNA]</scope>
    <source>
        <strain>HI2424</strain>
    </source>
</reference>
<organism>
    <name type="scientific">Burkholderia cenocepacia (strain HI2424)</name>
    <dbReference type="NCBI Taxonomy" id="331272"/>
    <lineage>
        <taxon>Bacteria</taxon>
        <taxon>Pseudomonadati</taxon>
        <taxon>Pseudomonadota</taxon>
        <taxon>Betaproteobacteria</taxon>
        <taxon>Burkholderiales</taxon>
        <taxon>Burkholderiaceae</taxon>
        <taxon>Burkholderia</taxon>
        <taxon>Burkholderia cepacia complex</taxon>
    </lineage>
</organism>
<protein>
    <recommendedName>
        <fullName evidence="2">NADH-quinone oxidoreductase subunit B</fullName>
        <ecNumber evidence="2">7.1.1.-</ecNumber>
    </recommendedName>
    <alternativeName>
        <fullName evidence="2">NADH dehydrogenase I subunit B</fullName>
    </alternativeName>
    <alternativeName>
        <fullName evidence="2">NDH-1 subunit B</fullName>
    </alternativeName>
</protein>
<feature type="chain" id="PRO_0000358366" description="NADH-quinone oxidoreductase subunit B">
    <location>
        <begin position="1"/>
        <end position="159"/>
    </location>
</feature>
<feature type="binding site" evidence="2">
    <location>
        <position position="37"/>
    </location>
    <ligand>
        <name>[4Fe-4S] cluster</name>
        <dbReference type="ChEBI" id="CHEBI:49883"/>
    </ligand>
</feature>
<feature type="binding site" evidence="2">
    <location>
        <position position="38"/>
    </location>
    <ligand>
        <name>[4Fe-4S] cluster</name>
        <dbReference type="ChEBI" id="CHEBI:49883"/>
    </ligand>
</feature>
<feature type="binding site" evidence="2">
    <location>
        <position position="102"/>
    </location>
    <ligand>
        <name>[4Fe-4S] cluster</name>
        <dbReference type="ChEBI" id="CHEBI:49883"/>
    </ligand>
</feature>
<feature type="binding site" evidence="2">
    <location>
        <position position="132"/>
    </location>
    <ligand>
        <name>[4Fe-4S] cluster</name>
        <dbReference type="ChEBI" id="CHEBI:49883"/>
    </ligand>
</feature>